<evidence type="ECO:0000255" key="1">
    <source>
        <dbReference type="HAMAP-Rule" id="MF_01315"/>
    </source>
</evidence>
<evidence type="ECO:0000256" key="2">
    <source>
        <dbReference type="SAM" id="MobiDB-lite"/>
    </source>
</evidence>
<evidence type="ECO:0000305" key="3"/>
<organism>
    <name type="scientific">Streptococcus pyogenes serotype M3 (strain ATCC BAA-595 / MGAS315)</name>
    <dbReference type="NCBI Taxonomy" id="198466"/>
    <lineage>
        <taxon>Bacteria</taxon>
        <taxon>Bacillati</taxon>
        <taxon>Bacillota</taxon>
        <taxon>Bacilli</taxon>
        <taxon>Lactobacillales</taxon>
        <taxon>Streptococcaceae</taxon>
        <taxon>Streptococcus</taxon>
    </lineage>
</organism>
<keyword id="KW-0687">Ribonucleoprotein</keyword>
<keyword id="KW-0689">Ribosomal protein</keyword>
<keyword id="KW-0694">RNA-binding</keyword>
<keyword id="KW-0699">rRNA-binding</keyword>
<keyword id="KW-0820">tRNA-binding</keyword>
<feature type="chain" id="PRO_0000132152" description="Small ribosomal subunit protein uS13">
    <location>
        <begin position="1"/>
        <end position="121"/>
    </location>
</feature>
<feature type="region of interest" description="Disordered" evidence="2">
    <location>
        <begin position="96"/>
        <end position="121"/>
    </location>
</feature>
<feature type="compositionally biased region" description="Basic residues" evidence="2">
    <location>
        <begin position="106"/>
        <end position="121"/>
    </location>
</feature>
<comment type="function">
    <text evidence="1">Located at the top of the head of the 30S subunit, it contacts several helices of the 16S rRNA. In the 70S ribosome it contacts the 23S rRNA (bridge B1a) and protein L5 of the 50S subunit (bridge B1b), connecting the 2 subunits; these bridges are implicated in subunit movement. Contacts the tRNAs in the A and P-sites.</text>
</comment>
<comment type="subunit">
    <text evidence="1">Part of the 30S ribosomal subunit. Forms a loose heterodimer with protein S19. Forms two bridges to the 50S subunit in the 70S ribosome.</text>
</comment>
<comment type="similarity">
    <text evidence="1">Belongs to the universal ribosomal protein uS13 family.</text>
</comment>
<reference key="1">
    <citation type="journal article" date="2002" name="Proc. Natl. Acad. Sci. U.S.A.">
        <title>Genome sequence of a serotype M3 strain of group A Streptococcus: phage-encoded toxins, the high-virulence phenotype, and clone emergence.</title>
        <authorList>
            <person name="Beres S.B."/>
            <person name="Sylva G.L."/>
            <person name="Barbian K.D."/>
            <person name="Lei B."/>
            <person name="Hoff J.S."/>
            <person name="Mammarella N.D."/>
            <person name="Liu M.-Y."/>
            <person name="Smoot J.C."/>
            <person name="Porcella S.F."/>
            <person name="Parkins L.D."/>
            <person name="Campbell D.S."/>
            <person name="Smith T.M."/>
            <person name="McCormick J.K."/>
            <person name="Leung D.Y.M."/>
            <person name="Schlievert P.M."/>
            <person name="Musser J.M."/>
        </authorList>
    </citation>
    <scope>NUCLEOTIDE SEQUENCE [LARGE SCALE GENOMIC DNA]</scope>
    <source>
        <strain>ATCC BAA-595 / MGAS315</strain>
    </source>
</reference>
<proteinExistence type="inferred from homology"/>
<name>RS13_STRP3</name>
<gene>
    <name evidence="1" type="primary">rpsM</name>
    <name type="ordered locus">SpyM3_0064</name>
</gene>
<accession>P0DE68</accession>
<accession>P66395</accession>
<accession>Q9A1V1</accession>
<sequence>MARIAGVDIPNDKRVVISLTYVYGIGLATSKKILAAAGISEDIRVKDLTSDQEDAIRREVDAIKVEGDLRREVNMNIKRLMEIGSYRGIRHRRGLPVRGQNTKNNARTRKGKAVAIAGKKK</sequence>
<dbReference type="EMBL" id="AE014074">
    <property type="protein sequence ID" value="AAM78671.1"/>
    <property type="molecule type" value="Genomic_DNA"/>
</dbReference>
<dbReference type="RefSeq" id="WP_002986615.1">
    <property type="nucleotide sequence ID" value="NC_004070.1"/>
</dbReference>
<dbReference type="SMR" id="P0DE68"/>
<dbReference type="GeneID" id="69900050"/>
<dbReference type="KEGG" id="spg:SpyM3_0064"/>
<dbReference type="HOGENOM" id="CLU_103849_1_1_9"/>
<dbReference type="Proteomes" id="UP000000564">
    <property type="component" value="Chromosome"/>
</dbReference>
<dbReference type="GO" id="GO:0005829">
    <property type="term" value="C:cytosol"/>
    <property type="evidence" value="ECO:0007669"/>
    <property type="project" value="TreeGrafter"/>
</dbReference>
<dbReference type="GO" id="GO:0015935">
    <property type="term" value="C:small ribosomal subunit"/>
    <property type="evidence" value="ECO:0007669"/>
    <property type="project" value="TreeGrafter"/>
</dbReference>
<dbReference type="GO" id="GO:0019843">
    <property type="term" value="F:rRNA binding"/>
    <property type="evidence" value="ECO:0007669"/>
    <property type="project" value="UniProtKB-UniRule"/>
</dbReference>
<dbReference type="GO" id="GO:0003735">
    <property type="term" value="F:structural constituent of ribosome"/>
    <property type="evidence" value="ECO:0007669"/>
    <property type="project" value="InterPro"/>
</dbReference>
<dbReference type="GO" id="GO:0000049">
    <property type="term" value="F:tRNA binding"/>
    <property type="evidence" value="ECO:0007669"/>
    <property type="project" value="UniProtKB-UniRule"/>
</dbReference>
<dbReference type="GO" id="GO:0006412">
    <property type="term" value="P:translation"/>
    <property type="evidence" value="ECO:0007669"/>
    <property type="project" value="UniProtKB-UniRule"/>
</dbReference>
<dbReference type="FunFam" id="1.10.8.50:FF:000001">
    <property type="entry name" value="30S ribosomal protein S13"/>
    <property type="match status" value="1"/>
</dbReference>
<dbReference type="FunFam" id="4.10.910.10:FF:000001">
    <property type="entry name" value="30S ribosomal protein S13"/>
    <property type="match status" value="1"/>
</dbReference>
<dbReference type="Gene3D" id="1.10.8.50">
    <property type="match status" value="1"/>
</dbReference>
<dbReference type="Gene3D" id="4.10.910.10">
    <property type="entry name" value="30s ribosomal protein s13, domain 2"/>
    <property type="match status" value="1"/>
</dbReference>
<dbReference type="HAMAP" id="MF_01315">
    <property type="entry name" value="Ribosomal_uS13"/>
    <property type="match status" value="1"/>
</dbReference>
<dbReference type="InterPro" id="IPR027437">
    <property type="entry name" value="Rbsml_uS13_C"/>
</dbReference>
<dbReference type="InterPro" id="IPR001892">
    <property type="entry name" value="Ribosomal_uS13"/>
</dbReference>
<dbReference type="InterPro" id="IPR010979">
    <property type="entry name" value="Ribosomal_uS13-like_H2TH"/>
</dbReference>
<dbReference type="InterPro" id="IPR019980">
    <property type="entry name" value="Ribosomal_uS13_bac-type"/>
</dbReference>
<dbReference type="InterPro" id="IPR018269">
    <property type="entry name" value="Ribosomal_uS13_CS"/>
</dbReference>
<dbReference type="NCBIfam" id="TIGR03631">
    <property type="entry name" value="uS13_bact"/>
    <property type="match status" value="1"/>
</dbReference>
<dbReference type="PANTHER" id="PTHR10871">
    <property type="entry name" value="30S RIBOSOMAL PROTEIN S13/40S RIBOSOMAL PROTEIN S18"/>
    <property type="match status" value="1"/>
</dbReference>
<dbReference type="PANTHER" id="PTHR10871:SF1">
    <property type="entry name" value="SMALL RIBOSOMAL SUBUNIT PROTEIN US13M"/>
    <property type="match status" value="1"/>
</dbReference>
<dbReference type="Pfam" id="PF00416">
    <property type="entry name" value="Ribosomal_S13"/>
    <property type="match status" value="1"/>
</dbReference>
<dbReference type="PIRSF" id="PIRSF002134">
    <property type="entry name" value="Ribosomal_S13"/>
    <property type="match status" value="1"/>
</dbReference>
<dbReference type="SUPFAM" id="SSF46946">
    <property type="entry name" value="S13-like H2TH domain"/>
    <property type="match status" value="1"/>
</dbReference>
<dbReference type="PROSITE" id="PS00646">
    <property type="entry name" value="RIBOSOMAL_S13_1"/>
    <property type="match status" value="1"/>
</dbReference>
<dbReference type="PROSITE" id="PS50159">
    <property type="entry name" value="RIBOSOMAL_S13_2"/>
    <property type="match status" value="1"/>
</dbReference>
<protein>
    <recommendedName>
        <fullName evidence="1">Small ribosomal subunit protein uS13</fullName>
    </recommendedName>
    <alternativeName>
        <fullName evidence="3">30S ribosomal protein S13</fullName>
    </alternativeName>
</protein>